<protein>
    <recommendedName>
        <fullName>Solute carrier family 12 member 3</fullName>
    </recommendedName>
    <alternativeName>
        <fullName>Na-Cl symporter</fullName>
    </alternativeName>
    <alternativeName>
        <fullName>Thiazide-sensitive sodium-chloride cotransporter</fullName>
    </alternativeName>
</protein>
<evidence type="ECO:0000250" key="1">
    <source>
        <dbReference type="UniProtKB" id="P55017"/>
    </source>
</evidence>
<evidence type="ECO:0000250" key="2">
    <source>
        <dbReference type="UniProtKB" id="P59158"/>
    </source>
</evidence>
<evidence type="ECO:0000255" key="3"/>
<evidence type="ECO:0000256" key="4">
    <source>
        <dbReference type="SAM" id="MobiDB-lite"/>
    </source>
</evidence>
<evidence type="ECO:0000269" key="5">
    <source>
    </source>
</evidence>
<evidence type="ECO:0000305" key="6"/>
<sequence>MELPGDGVHLASYGPRAPQLAVNGKAPAGGLDGSGYYQCYRDGSSVASRGSDAPTGYDTVDAPPHYDFYANTEVWGRRRRVRPSLYQLSVDPEQDDFKPPMYEETAGERMGGGDSSEEEEEEHKEPPPEPPRFGWVQGVMIRCMLNIWGVILYLRLPWITAQAGIGLTWVIILLSSFITGITGLSTSAIATNGKVKGGGTYFLISRSLGPELGGSIGLIFAFANAVAVAMHTVGFAETVTDLMRENGVVMVDPINDIRIVGVITVTCLLGISMAGMEWESKAQVLFFLVIMVSFVNYIVGTIIPASPQKQAKGFFSYKAEIFAANFVPGWRGKEGSFFGMFSIFFPSATGILAGANISGDLKDPTVAIPRGTLMAIFWTTISYLIISATIGACVVRDASGELNDTLSYSSSSENCSGLACQYRWDFSECIKNNTCKHGIMNYYQSMSLVSAFAPLISAGIFGATLSSALACLVSAPKVFQCLCKDQLYPLIGFFGKGYGKNAEPLRAYLLTYVIAVCFVLIAELNTIAPIISNFFLCSYALINFSCFHASVTNSPGWRPSFRFYSKWLSLLGAVCCVVIMFLLTWWAALIAFGVVFFLLGYTLYKKPAVNWGSSVQASSYSMALNQCVGLNQVEDHVKNYRPQCLVLTGPPCCRPALVDLVGCLTKRLSLMMCGHVVTAGPSPVSERHVTWLNQRKVRSFYRGVVAADLRSGVNMLLQGAGLGRIKPNVLLMGFKKDWGCDSPQAAHHYIGILHDAFDLHYGVCVLRVKEGLDASHPPQCHVNPGFDGGPESINTVCAPACVQTSVTSSVSMDPDPQPSSVFQKKQGKKTIDIYWLSDDGGLTLLLPYLLTRRKRWAGCKVRVFVGGDTDKKEEQKEEVLALIKKFRLGFHDVEVLPDIHQPPQPGNVDHFEDSVNRFRLETNPKQDSDSGPQQQQQEEPWMITEQDLERNRAKSLRQIRLNEVLQVHSREAALIVITMPVGRRGVCPSTLFLAWLDVLSRDLRPPVLLVRGNQENVLTFYCQ</sequence>
<feature type="chain" id="PRO_0000178029" description="Solute carrier family 12 member 3">
    <location>
        <begin position="1"/>
        <end position="1023"/>
    </location>
</feature>
<feature type="topological domain" description="Cytoplasmic" evidence="6">
    <location>
        <begin position="1"/>
        <end position="134"/>
    </location>
</feature>
<feature type="transmembrane region" description="Discontinuously helical; Name=1" evidence="1">
    <location>
        <begin position="135"/>
        <end position="164"/>
    </location>
</feature>
<feature type="transmembrane region" description="Helical; Name=2" evidence="1">
    <location>
        <begin position="165"/>
        <end position="186"/>
    </location>
</feature>
<feature type="topological domain" description="Cytoplasmic" evidence="6">
    <location>
        <begin position="187"/>
        <end position="217"/>
    </location>
</feature>
<feature type="transmembrane region" description="Helical; Name=3" evidence="1">
    <location>
        <begin position="218"/>
        <end position="240"/>
    </location>
</feature>
<feature type="topological domain" description="Extracellular" evidence="6">
    <location>
        <begin position="241"/>
        <end position="252"/>
    </location>
</feature>
<feature type="transmembrane region" description="Helical; Name=4" evidence="1">
    <location>
        <begin position="253"/>
        <end position="277"/>
    </location>
</feature>
<feature type="transmembrane region" description="Helical; Name=5" evidence="1">
    <location>
        <begin position="278"/>
        <end position="300"/>
    </location>
</feature>
<feature type="topological domain" description="Extracellular" evidence="6">
    <location>
        <begin position="301"/>
        <end position="335"/>
    </location>
</feature>
<feature type="transmembrane region" description="Discontinuously helical; Name=6" evidence="1">
    <location>
        <begin position="336"/>
        <end position="357"/>
    </location>
</feature>
<feature type="topological domain" description="Cytoplasmic" evidence="6">
    <location>
        <begin position="358"/>
        <end position="368"/>
    </location>
</feature>
<feature type="transmembrane region" description="Helical; Name=7" evidence="1">
    <location>
        <begin position="369"/>
        <end position="390"/>
    </location>
</feature>
<feature type="topological domain" description="Extracellular" evidence="6">
    <location>
        <begin position="391"/>
        <end position="452"/>
    </location>
</feature>
<feature type="transmembrane region" description="Helical; Name=8" evidence="1">
    <location>
        <begin position="453"/>
        <end position="476"/>
    </location>
</feature>
<feature type="topological domain" description="Cytoplasmic" evidence="6">
    <location>
        <begin position="477"/>
        <end position="506"/>
    </location>
</feature>
<feature type="transmembrane region" description="Helical; Name=9" evidence="1">
    <location>
        <begin position="507"/>
        <end position="521"/>
    </location>
</feature>
<feature type="topological domain" description="Extracellular" evidence="6">
    <location>
        <begin position="522"/>
        <end position="526"/>
    </location>
</feature>
<feature type="transmembrane region" description="Helical; Name=10" evidence="1">
    <location>
        <begin position="527"/>
        <end position="543"/>
    </location>
</feature>
<feature type="topological domain" description="Cytoplasmic" evidence="6">
    <location>
        <begin position="544"/>
        <end position="566"/>
    </location>
</feature>
<feature type="transmembrane region" description="Helical; Name=11" evidence="1">
    <location>
        <begin position="567"/>
        <end position="586"/>
    </location>
</feature>
<feature type="transmembrane region" description="Helical; Name=12" evidence="1">
    <location>
        <begin position="587"/>
        <end position="598"/>
    </location>
</feature>
<feature type="topological domain" description="Cytoplasmic" evidence="6">
    <location>
        <begin position="599"/>
        <end position="1023"/>
    </location>
</feature>
<feature type="region of interest" description="Disordered" evidence="4">
    <location>
        <begin position="91"/>
        <end position="131"/>
    </location>
</feature>
<feature type="region of interest" description="Scissor helix" evidence="1">
    <location>
        <begin position="614"/>
        <end position="629"/>
    </location>
</feature>
<feature type="binding site" evidence="1">
    <location>
        <position position="145"/>
    </location>
    <ligand>
        <name>Na(+)</name>
        <dbReference type="ChEBI" id="CHEBI:29101"/>
    </ligand>
</feature>
<feature type="binding site" evidence="1">
    <location>
        <position position="148"/>
    </location>
    <ligand>
        <name>Na(+)</name>
        <dbReference type="ChEBI" id="CHEBI:29101"/>
    </ligand>
</feature>
<feature type="binding site" evidence="1">
    <location>
        <position position="350"/>
    </location>
    <ligand>
        <name>chloride</name>
        <dbReference type="ChEBI" id="CHEBI:17996"/>
    </ligand>
</feature>
<feature type="binding site" evidence="1">
    <location>
        <position position="351"/>
    </location>
    <ligand>
        <name>chloride</name>
        <dbReference type="ChEBI" id="CHEBI:17996"/>
    </ligand>
</feature>
<feature type="binding site" evidence="1">
    <location>
        <position position="352"/>
    </location>
    <ligand>
        <name>chloride</name>
        <dbReference type="ChEBI" id="CHEBI:17996"/>
    </ligand>
</feature>
<feature type="binding site" evidence="1">
    <location>
        <position position="463"/>
    </location>
    <ligand>
        <name>Na(+)</name>
        <dbReference type="ChEBI" id="CHEBI:29101"/>
    </ligand>
</feature>
<feature type="binding site" evidence="1">
    <location>
        <position position="466"/>
    </location>
    <ligand>
        <name>Na(+)</name>
        <dbReference type="ChEBI" id="CHEBI:29101"/>
    </ligand>
</feature>
<feature type="binding site" evidence="1">
    <location>
        <position position="467"/>
    </location>
    <ligand>
        <name>Na(+)</name>
        <dbReference type="ChEBI" id="CHEBI:29101"/>
    </ligand>
</feature>
<feature type="binding site" evidence="1">
    <location>
        <position position="539"/>
    </location>
    <ligand>
        <name>chloride</name>
        <dbReference type="ChEBI" id="CHEBI:17996"/>
    </ligand>
</feature>
<feature type="binding site" evidence="1">
    <location>
        <position position="647"/>
    </location>
    <ligand>
        <name>ATP</name>
        <dbReference type="ChEBI" id="CHEBI:30616"/>
    </ligand>
</feature>
<feature type="binding site" evidence="1">
    <location>
        <position position="654"/>
    </location>
    <ligand>
        <name>ATP</name>
        <dbReference type="ChEBI" id="CHEBI:30616"/>
    </ligand>
</feature>
<feature type="binding site" evidence="1">
    <location>
        <position position="676"/>
    </location>
    <ligand>
        <name>ATP</name>
        <dbReference type="ChEBI" id="CHEBI:30616"/>
    </ligand>
</feature>
<feature type="binding site" evidence="1">
    <location>
        <position position="733"/>
    </location>
    <ligand>
        <name>ATP</name>
        <dbReference type="ChEBI" id="CHEBI:30616"/>
    </ligand>
</feature>
<feature type="binding site" evidence="1">
    <location>
        <position position="772"/>
    </location>
    <ligand>
        <name>ATP</name>
        <dbReference type="ChEBI" id="CHEBI:30616"/>
    </ligand>
</feature>
<feature type="glycosylation site" description="N-linked (GlcNAc...) asparagine" evidence="3">
    <location>
        <position position="403"/>
    </location>
</feature>
<feature type="glycosylation site" description="N-linked (GlcNAc...) asparagine" evidence="3">
    <location>
        <position position="414"/>
    </location>
</feature>
<feature type="glycosylation site" description="N-linked (GlcNAc...) asparagine" evidence="3">
    <location>
        <position position="432"/>
    </location>
</feature>
<feature type="disulfide bond" evidence="1">
    <location>
        <begin position="415"/>
        <end position="420"/>
    </location>
</feature>
<feature type="disulfide bond" evidence="1">
    <location>
        <begin position="429"/>
        <end position="435"/>
    </location>
</feature>
<keyword id="KW-0067">ATP-binding</keyword>
<keyword id="KW-1003">Cell membrane</keyword>
<keyword id="KW-0868">Chloride</keyword>
<keyword id="KW-1015">Disulfide bond</keyword>
<keyword id="KW-0325">Glycoprotein</keyword>
<keyword id="KW-0406">Ion transport</keyword>
<keyword id="KW-0472">Membrane</keyword>
<keyword id="KW-0479">Metal-binding</keyword>
<keyword id="KW-0547">Nucleotide-binding</keyword>
<keyword id="KW-0915">Sodium</keyword>
<keyword id="KW-0739">Sodium transport</keyword>
<keyword id="KW-0769">Symport</keyword>
<keyword id="KW-0812">Transmembrane</keyword>
<keyword id="KW-1133">Transmembrane helix</keyword>
<keyword id="KW-0813">Transport</keyword>
<name>S12A3_PSEAM</name>
<reference key="1">
    <citation type="journal article" date="1993" name="Proc. Natl. Acad. Sci. U.S.A.">
        <title>Primary structure and functional expression of a cDNA encoding the thiazide-sensitive, electroneutral sodium-chloride cotransporter.</title>
        <authorList>
            <person name="Gamba G."/>
            <person name="Saltzberg S.N."/>
            <person name="Lombardi M."/>
            <person name="Miyanoshita A."/>
            <person name="Lytton J."/>
            <person name="Hediger M.A."/>
            <person name="Brenner B.M."/>
            <person name="Hebert S.C."/>
        </authorList>
    </citation>
    <scope>NUCLEOTIDE SEQUENCE [MRNA]</scope>
    <scope>FUNCTION</scope>
    <scope>TRANSPORT ACTIVITY</scope>
    <scope>ACTIVITY REGULATION</scope>
    <scope>BIOPHYSICOCHEMICAL PROPERTIES</scope>
    <scope>TISSUE SPECIFICITY</scope>
    <source>
        <tissue>Urinary bladder urothelium</tissue>
    </source>
</reference>
<accession>P55019</accession>
<organism>
    <name type="scientific">Pseudopleuronectes americanus</name>
    <name type="common">Winter flounder</name>
    <name type="synonym">Pleuronectes americanus</name>
    <dbReference type="NCBI Taxonomy" id="8265"/>
    <lineage>
        <taxon>Eukaryota</taxon>
        <taxon>Metazoa</taxon>
        <taxon>Chordata</taxon>
        <taxon>Craniata</taxon>
        <taxon>Vertebrata</taxon>
        <taxon>Euteleostomi</taxon>
        <taxon>Actinopterygii</taxon>
        <taxon>Neopterygii</taxon>
        <taxon>Teleostei</taxon>
        <taxon>Neoteleostei</taxon>
        <taxon>Acanthomorphata</taxon>
        <taxon>Carangaria</taxon>
        <taxon>Pleuronectiformes</taxon>
        <taxon>Pleuronectoidei</taxon>
        <taxon>Pleuronectidae</taxon>
        <taxon>Pseudopleuronectes</taxon>
    </lineage>
</organism>
<proteinExistence type="evidence at protein level"/>
<dbReference type="EMBL" id="L11615">
    <property type="protein sequence ID" value="AAA49272.1"/>
    <property type="molecule type" value="mRNA"/>
</dbReference>
<dbReference type="PIR" id="A47296">
    <property type="entry name" value="A47296"/>
</dbReference>
<dbReference type="SMR" id="P55019"/>
<dbReference type="GlyCosmos" id="P55019">
    <property type="glycosylation" value="4 sites, No reported glycans"/>
</dbReference>
<dbReference type="GO" id="GO:0016324">
    <property type="term" value="C:apical plasma membrane"/>
    <property type="evidence" value="ECO:0007669"/>
    <property type="project" value="TreeGrafter"/>
</dbReference>
<dbReference type="GO" id="GO:0005524">
    <property type="term" value="F:ATP binding"/>
    <property type="evidence" value="ECO:0007669"/>
    <property type="project" value="UniProtKB-KW"/>
</dbReference>
<dbReference type="GO" id="GO:0046872">
    <property type="term" value="F:metal ion binding"/>
    <property type="evidence" value="ECO:0007669"/>
    <property type="project" value="UniProtKB-KW"/>
</dbReference>
<dbReference type="GO" id="GO:0008511">
    <property type="term" value="F:sodium:potassium:chloride symporter activity"/>
    <property type="evidence" value="ECO:0007669"/>
    <property type="project" value="TreeGrafter"/>
</dbReference>
<dbReference type="GO" id="GO:0006884">
    <property type="term" value="P:cell volume homeostasis"/>
    <property type="evidence" value="ECO:0007669"/>
    <property type="project" value="TreeGrafter"/>
</dbReference>
<dbReference type="GO" id="GO:0055064">
    <property type="term" value="P:chloride ion homeostasis"/>
    <property type="evidence" value="ECO:0007669"/>
    <property type="project" value="TreeGrafter"/>
</dbReference>
<dbReference type="GO" id="GO:0055075">
    <property type="term" value="P:potassium ion homeostasis"/>
    <property type="evidence" value="ECO:0007669"/>
    <property type="project" value="TreeGrafter"/>
</dbReference>
<dbReference type="GO" id="GO:1990573">
    <property type="term" value="P:potassium ion import across plasma membrane"/>
    <property type="evidence" value="ECO:0007669"/>
    <property type="project" value="TreeGrafter"/>
</dbReference>
<dbReference type="GO" id="GO:0055078">
    <property type="term" value="P:sodium ion homeostasis"/>
    <property type="evidence" value="ECO:0007669"/>
    <property type="project" value="TreeGrafter"/>
</dbReference>
<dbReference type="Gene3D" id="1.20.1740.10">
    <property type="entry name" value="Amino acid/polyamine transporter I"/>
    <property type="match status" value="1"/>
</dbReference>
<dbReference type="InterPro" id="IPR004841">
    <property type="entry name" value="AA-permease/SLC12A_dom"/>
</dbReference>
<dbReference type="InterPro" id="IPR013612">
    <property type="entry name" value="AA_permease_N"/>
</dbReference>
<dbReference type="InterPro" id="IPR018491">
    <property type="entry name" value="SLC12_C"/>
</dbReference>
<dbReference type="InterPro" id="IPR002948">
    <property type="entry name" value="SLC12A3"/>
</dbReference>
<dbReference type="InterPro" id="IPR004842">
    <property type="entry name" value="SLC12A_fam"/>
</dbReference>
<dbReference type="NCBIfam" id="TIGR00930">
    <property type="entry name" value="2a30"/>
    <property type="match status" value="1"/>
</dbReference>
<dbReference type="PANTHER" id="PTHR11827:SF9">
    <property type="entry name" value="SOLUTE CARRIER FAMILY 12 MEMBER 3"/>
    <property type="match status" value="1"/>
</dbReference>
<dbReference type="PANTHER" id="PTHR11827">
    <property type="entry name" value="SOLUTE CARRIER FAMILY 12, CATION COTRANSPORTERS"/>
    <property type="match status" value="1"/>
</dbReference>
<dbReference type="Pfam" id="PF00324">
    <property type="entry name" value="AA_permease"/>
    <property type="match status" value="1"/>
</dbReference>
<dbReference type="Pfam" id="PF08403">
    <property type="entry name" value="AA_permease_N"/>
    <property type="match status" value="1"/>
</dbReference>
<dbReference type="Pfam" id="PF03522">
    <property type="entry name" value="SLC12"/>
    <property type="match status" value="2"/>
</dbReference>
<dbReference type="PRINTS" id="PR01230">
    <property type="entry name" value="NACLTRNSPORT"/>
</dbReference>
<gene>
    <name type="primary">slc12a3</name>
    <name type="synonym">tsc</name>
</gene>
<comment type="function">
    <text evidence="5">Electroneutral sodium and chloride ion cotransporter, with a coupling ratio 1 Na(+):1 Cl(-). Mediates sodium and chloride reabsorption.</text>
</comment>
<comment type="catalytic activity">
    <reaction evidence="5">
        <text>chloride(out) + Na(+)(out) = chloride(in) + Na(+)(in)</text>
        <dbReference type="Rhea" id="RHEA:73887"/>
        <dbReference type="ChEBI" id="CHEBI:17996"/>
        <dbReference type="ChEBI" id="CHEBI:29101"/>
    </reaction>
</comment>
<comment type="activity regulation">
    <text evidence="1 5">Inhibited by thiazide-type diuretics including polythiazide, metolazone, cyclothiazide, hydrochlorothiazide and chlorthalidone (PubMed:8464884). Thiazide drugs, specifically inhibit SLC12A3/NCC transporter activity by competing with chloride for binding (By similarity).</text>
</comment>
<comment type="biophysicochemical properties">
    <kinetics>
        <KM evidence="5">25 mM for Na(+)</KM>
        <KM evidence="5">13.6 mM for Cl(-)</KM>
    </kinetics>
</comment>
<comment type="subunit">
    <text evidence="1">Homodimer; adopts a domain-swap conformation at the scissor helices connecting the transmembrane domain and C-terminal domain (By similarity).</text>
</comment>
<comment type="subcellular location">
    <subcellularLocation>
        <location evidence="2">Cell membrane</location>
        <topology evidence="3">Multi-pass membrane protein</topology>
    </subcellularLocation>
</comment>
<comment type="tissue specificity">
    <text evidence="5">Expressed in urinary bladder, intestine, ovary, skeletal muscle, eye, brain, and kidney.</text>
</comment>
<comment type="similarity">
    <text evidence="6">Belongs to the SLC12A transporter family.</text>
</comment>